<gene>
    <name evidence="1" type="primary">pyrR</name>
    <name type="ordered locus">Emin_0724</name>
</gene>
<comment type="function">
    <text evidence="1">Regulates the transcription of the pyrimidine nucleotide (pyr) operon in response to exogenous pyrimidines.</text>
</comment>
<comment type="function">
    <text evidence="1">Also displays a weak uracil phosphoribosyltransferase activity which is not physiologically significant.</text>
</comment>
<comment type="catalytic activity">
    <reaction evidence="1">
        <text>UMP + diphosphate = 5-phospho-alpha-D-ribose 1-diphosphate + uracil</text>
        <dbReference type="Rhea" id="RHEA:13017"/>
        <dbReference type="ChEBI" id="CHEBI:17568"/>
        <dbReference type="ChEBI" id="CHEBI:33019"/>
        <dbReference type="ChEBI" id="CHEBI:57865"/>
        <dbReference type="ChEBI" id="CHEBI:58017"/>
        <dbReference type="EC" id="2.4.2.9"/>
    </reaction>
</comment>
<comment type="similarity">
    <text evidence="1">Belongs to the purine/pyrimidine phosphoribosyltransferase family. PyrR subfamily.</text>
</comment>
<dbReference type="EC" id="2.4.2.9" evidence="1"/>
<dbReference type="EMBL" id="CP001055">
    <property type="protein sequence ID" value="ACC98279.1"/>
    <property type="molecule type" value="Genomic_DNA"/>
</dbReference>
<dbReference type="RefSeq" id="WP_012414894.1">
    <property type="nucleotide sequence ID" value="NC_010644.1"/>
</dbReference>
<dbReference type="SMR" id="B2KCN3"/>
<dbReference type="STRING" id="445932.Emin_0724"/>
<dbReference type="KEGG" id="emi:Emin_0724"/>
<dbReference type="HOGENOM" id="CLU_094234_2_1_0"/>
<dbReference type="OrthoDB" id="9802227at2"/>
<dbReference type="Proteomes" id="UP000001029">
    <property type="component" value="Chromosome"/>
</dbReference>
<dbReference type="GO" id="GO:0004845">
    <property type="term" value="F:uracil phosphoribosyltransferase activity"/>
    <property type="evidence" value="ECO:0007669"/>
    <property type="project" value="UniProtKB-UniRule"/>
</dbReference>
<dbReference type="GO" id="GO:0006355">
    <property type="term" value="P:regulation of DNA-templated transcription"/>
    <property type="evidence" value="ECO:0007669"/>
    <property type="project" value="UniProtKB-UniRule"/>
</dbReference>
<dbReference type="CDD" id="cd06223">
    <property type="entry name" value="PRTases_typeI"/>
    <property type="match status" value="1"/>
</dbReference>
<dbReference type="FunFam" id="3.40.50.2020:FF:000020">
    <property type="entry name" value="Bifunctional protein PyrR"/>
    <property type="match status" value="1"/>
</dbReference>
<dbReference type="Gene3D" id="3.40.50.2020">
    <property type="match status" value="1"/>
</dbReference>
<dbReference type="HAMAP" id="MF_01219">
    <property type="entry name" value="PyrR"/>
    <property type="match status" value="1"/>
</dbReference>
<dbReference type="InterPro" id="IPR000836">
    <property type="entry name" value="PRibTrfase_dom"/>
</dbReference>
<dbReference type="InterPro" id="IPR029057">
    <property type="entry name" value="PRTase-like"/>
</dbReference>
<dbReference type="InterPro" id="IPR023050">
    <property type="entry name" value="PyrR"/>
</dbReference>
<dbReference type="InterPro" id="IPR050137">
    <property type="entry name" value="PyrR_bifunctional"/>
</dbReference>
<dbReference type="NCBIfam" id="NF003545">
    <property type="entry name" value="PRK05205.1-1"/>
    <property type="match status" value="1"/>
</dbReference>
<dbReference type="NCBIfam" id="NF003549">
    <property type="entry name" value="PRK05205.1-5"/>
    <property type="match status" value="1"/>
</dbReference>
<dbReference type="PANTHER" id="PTHR11608">
    <property type="entry name" value="BIFUNCTIONAL PROTEIN PYRR"/>
    <property type="match status" value="1"/>
</dbReference>
<dbReference type="PANTHER" id="PTHR11608:SF0">
    <property type="entry name" value="BIFUNCTIONAL PROTEIN PYRR"/>
    <property type="match status" value="1"/>
</dbReference>
<dbReference type="Pfam" id="PF00156">
    <property type="entry name" value="Pribosyltran"/>
    <property type="match status" value="1"/>
</dbReference>
<dbReference type="SUPFAM" id="SSF53271">
    <property type="entry name" value="PRTase-like"/>
    <property type="match status" value="1"/>
</dbReference>
<proteinExistence type="inferred from homology"/>
<reference key="1">
    <citation type="journal article" date="2009" name="Appl. Environ. Microbiol.">
        <title>Genomic analysis of 'Elusimicrobium minutum,' the first cultivated representative of the phylum 'Elusimicrobia' (formerly termite group 1).</title>
        <authorList>
            <person name="Herlemann D.P.R."/>
            <person name="Geissinger O."/>
            <person name="Ikeda-Ohtsubo W."/>
            <person name="Kunin V."/>
            <person name="Sun H."/>
            <person name="Lapidus A."/>
            <person name="Hugenholtz P."/>
            <person name="Brune A."/>
        </authorList>
    </citation>
    <scope>NUCLEOTIDE SEQUENCE [LARGE SCALE GENOMIC DNA]</scope>
    <source>
        <strain>Pei191</strain>
    </source>
</reference>
<name>PYRR_ELUMP</name>
<accession>B2KCN3</accession>
<evidence type="ECO:0000255" key="1">
    <source>
        <dbReference type="HAMAP-Rule" id="MF_01219"/>
    </source>
</evidence>
<feature type="chain" id="PRO_1000139196" description="Bifunctional protein PyrR">
    <location>
        <begin position="1"/>
        <end position="179"/>
    </location>
</feature>
<feature type="short sequence motif" description="PRPP-binding" evidence="1">
    <location>
        <begin position="97"/>
        <end position="109"/>
    </location>
</feature>
<keyword id="KW-0328">Glycosyltransferase</keyword>
<keyword id="KW-1185">Reference proteome</keyword>
<keyword id="KW-0804">Transcription</keyword>
<keyword id="KW-0805">Transcription regulation</keyword>
<keyword id="KW-0808">Transferase</keyword>
<sequence>MEKLIKDGEELNRTLDRMAHEILEKHEIDNTLALVGIRTRGIYIARRLMEKIKKITGKDVLYGELDITLYRDDLSQVAEQPVLKATNIPFDITGKTIILTDDVLYTGRTIRSALAALSDFGRPSRIELAVIVDRGHRELPIKADYVGKNLPTAKTEIVHIKLKEYDGEDSITLLVKNND</sequence>
<protein>
    <recommendedName>
        <fullName evidence="1">Bifunctional protein PyrR</fullName>
    </recommendedName>
    <domain>
        <recommendedName>
            <fullName evidence="1">Pyrimidine operon regulatory protein</fullName>
        </recommendedName>
    </domain>
    <domain>
        <recommendedName>
            <fullName evidence="1">Uracil phosphoribosyltransferase</fullName>
            <shortName evidence="1">UPRTase</shortName>
            <ecNumber evidence="1">2.4.2.9</ecNumber>
        </recommendedName>
    </domain>
</protein>
<organism>
    <name type="scientific">Elusimicrobium minutum (strain Pei191)</name>
    <dbReference type="NCBI Taxonomy" id="445932"/>
    <lineage>
        <taxon>Bacteria</taxon>
        <taxon>Pseudomonadati</taxon>
        <taxon>Elusimicrobiota</taxon>
        <taxon>Elusimicrobia</taxon>
        <taxon>Elusimicrobiales</taxon>
        <taxon>Elusimicrobiaceae</taxon>
        <taxon>Elusimicrobium</taxon>
    </lineage>
</organism>